<organism>
    <name type="scientific">Mycobacterium tuberculosis (strain CDC 1551 / Oshkosh)</name>
    <dbReference type="NCBI Taxonomy" id="83331"/>
    <lineage>
        <taxon>Bacteria</taxon>
        <taxon>Bacillati</taxon>
        <taxon>Actinomycetota</taxon>
        <taxon>Actinomycetes</taxon>
        <taxon>Mycobacteriales</taxon>
        <taxon>Mycobacteriaceae</taxon>
        <taxon>Mycobacterium</taxon>
        <taxon>Mycobacterium tuberculosis complex</taxon>
    </lineage>
</organism>
<name>Y2006_MYCTO</name>
<dbReference type="EC" id="3.2.1.-"/>
<dbReference type="EMBL" id="AE000516">
    <property type="protein sequence ID" value="AAK46339.1"/>
    <property type="molecule type" value="Genomic_DNA"/>
</dbReference>
<dbReference type="PIR" id="D70759">
    <property type="entry name" value="D70759"/>
</dbReference>
<dbReference type="SMR" id="P9WN14"/>
<dbReference type="CAZy" id="GH65">
    <property type="family name" value="Glycoside Hydrolase Family 65"/>
</dbReference>
<dbReference type="KEGG" id="mtc:MT2062"/>
<dbReference type="PATRIC" id="fig|83331.31.peg.2220"/>
<dbReference type="HOGENOM" id="CLU_006285_1_0_11"/>
<dbReference type="Proteomes" id="UP000001020">
    <property type="component" value="Chromosome"/>
</dbReference>
<dbReference type="GO" id="GO:0030246">
    <property type="term" value="F:carbohydrate binding"/>
    <property type="evidence" value="ECO:0007669"/>
    <property type="project" value="InterPro"/>
</dbReference>
<dbReference type="GO" id="GO:0016757">
    <property type="term" value="F:glycosyltransferase activity"/>
    <property type="evidence" value="ECO:0007669"/>
    <property type="project" value="UniProtKB-ARBA"/>
</dbReference>
<dbReference type="GO" id="GO:0004553">
    <property type="term" value="F:hydrolase activity, hydrolyzing O-glycosyl compounds"/>
    <property type="evidence" value="ECO:0007669"/>
    <property type="project" value="TreeGrafter"/>
</dbReference>
<dbReference type="GO" id="GO:0016791">
    <property type="term" value="F:phosphatase activity"/>
    <property type="evidence" value="ECO:0007669"/>
    <property type="project" value="UniProtKB-ARBA"/>
</dbReference>
<dbReference type="GO" id="GO:0005992">
    <property type="term" value="P:trehalose biosynthetic process"/>
    <property type="evidence" value="ECO:0007669"/>
    <property type="project" value="InterPro"/>
</dbReference>
<dbReference type="CDD" id="cd01627">
    <property type="entry name" value="HAD_TPP"/>
    <property type="match status" value="1"/>
</dbReference>
<dbReference type="FunFam" id="1.50.10.10:FF:000053">
    <property type="entry name" value="Putative glycosyl hydrolase"/>
    <property type="match status" value="1"/>
</dbReference>
<dbReference type="FunFam" id="3.30.70.1020:FF:000007">
    <property type="entry name" value="Trehalose 6-phosphate phosphatase"/>
    <property type="match status" value="1"/>
</dbReference>
<dbReference type="FunFam" id="3.40.50.1000:FF:000310">
    <property type="entry name" value="Trehalose-6-phosphate phosphatase OtsB"/>
    <property type="match status" value="1"/>
</dbReference>
<dbReference type="Gene3D" id="1.50.10.10">
    <property type="match status" value="1"/>
</dbReference>
<dbReference type="Gene3D" id="2.70.98.40">
    <property type="entry name" value="Glycoside hydrolase, family 65, N-terminal domain"/>
    <property type="match status" value="1"/>
</dbReference>
<dbReference type="Gene3D" id="3.40.50.1000">
    <property type="entry name" value="HAD superfamily/HAD-like"/>
    <property type="match status" value="2"/>
</dbReference>
<dbReference type="Gene3D" id="2.60.420.10">
    <property type="entry name" value="Maltose phosphorylase, domain 3"/>
    <property type="match status" value="1"/>
</dbReference>
<dbReference type="Gene3D" id="1.10.150.240">
    <property type="entry name" value="Putative phosphatase, domain 2"/>
    <property type="match status" value="1"/>
</dbReference>
<dbReference type="Gene3D" id="3.30.70.1020">
    <property type="entry name" value="Trehalose-6-phosphate phosphatase related protein, domain 2"/>
    <property type="match status" value="1"/>
</dbReference>
<dbReference type="InterPro" id="IPR008928">
    <property type="entry name" value="6-hairpin_glycosidase_sf"/>
</dbReference>
<dbReference type="InterPro" id="IPR012341">
    <property type="entry name" value="6hp_glycosidase-like_sf"/>
</dbReference>
<dbReference type="InterPro" id="IPR011013">
    <property type="entry name" value="Gal_mutarotase_sf_dom"/>
</dbReference>
<dbReference type="InterPro" id="IPR005194">
    <property type="entry name" value="Glyco_hydro_65_C"/>
</dbReference>
<dbReference type="InterPro" id="IPR005195">
    <property type="entry name" value="Glyco_hydro_65_M"/>
</dbReference>
<dbReference type="InterPro" id="IPR005196">
    <property type="entry name" value="Glyco_hydro_65_N"/>
</dbReference>
<dbReference type="InterPro" id="IPR037018">
    <property type="entry name" value="Glyco_hydro_65_N_sf"/>
</dbReference>
<dbReference type="InterPro" id="IPR036412">
    <property type="entry name" value="HAD-like_sf"/>
</dbReference>
<dbReference type="InterPro" id="IPR006379">
    <property type="entry name" value="HAD-SF_hydro_IIB"/>
</dbReference>
<dbReference type="InterPro" id="IPR023214">
    <property type="entry name" value="HAD_sf"/>
</dbReference>
<dbReference type="InterPro" id="IPR023198">
    <property type="entry name" value="PGP-like_dom2"/>
</dbReference>
<dbReference type="InterPro" id="IPR003337">
    <property type="entry name" value="Trehalose_PPase"/>
</dbReference>
<dbReference type="NCBIfam" id="TIGR01484">
    <property type="entry name" value="HAD-SF-IIB"/>
    <property type="match status" value="1"/>
</dbReference>
<dbReference type="NCBIfam" id="TIGR00685">
    <property type="entry name" value="T6PP"/>
    <property type="match status" value="1"/>
</dbReference>
<dbReference type="PANTHER" id="PTHR11051">
    <property type="entry name" value="GLYCOSYL HYDROLASE-RELATED"/>
    <property type="match status" value="1"/>
</dbReference>
<dbReference type="PANTHER" id="PTHR11051:SF8">
    <property type="entry name" value="PROTEIN-GLUCOSYLGALACTOSYLHYDROXYLYSINE GLUCOSIDASE"/>
    <property type="match status" value="1"/>
</dbReference>
<dbReference type="Pfam" id="PF03633">
    <property type="entry name" value="Glyco_hydro_65C"/>
    <property type="match status" value="1"/>
</dbReference>
<dbReference type="Pfam" id="PF03632">
    <property type="entry name" value="Glyco_hydro_65m"/>
    <property type="match status" value="1"/>
</dbReference>
<dbReference type="Pfam" id="PF03636">
    <property type="entry name" value="Glyco_hydro_65N"/>
    <property type="match status" value="1"/>
</dbReference>
<dbReference type="Pfam" id="PF00702">
    <property type="entry name" value="Hydrolase"/>
    <property type="match status" value="1"/>
</dbReference>
<dbReference type="Pfam" id="PF02358">
    <property type="entry name" value="Trehalose_PPase"/>
    <property type="match status" value="1"/>
</dbReference>
<dbReference type="SUPFAM" id="SSF74650">
    <property type="entry name" value="Galactose mutarotase-like"/>
    <property type="match status" value="1"/>
</dbReference>
<dbReference type="SUPFAM" id="SSF56784">
    <property type="entry name" value="HAD-like"/>
    <property type="match status" value="2"/>
</dbReference>
<dbReference type="SUPFAM" id="SSF48208">
    <property type="entry name" value="Six-hairpin glycosidases"/>
    <property type="match status" value="1"/>
</dbReference>
<gene>
    <name type="ordered locus">MT2062</name>
</gene>
<accession>P9WN14</accession>
<accession>L0T8I0</accession>
<accession>Q10850</accession>
<proteinExistence type="evidence at transcript level"/>
<feature type="chain" id="PRO_0000427206" description="Uncharacterized glycosyl hydrolase MT2062">
    <location>
        <begin position="1"/>
        <end position="1327"/>
    </location>
</feature>
<feature type="active site" description="Proton donor" evidence="1">
    <location>
        <position position="1023"/>
    </location>
</feature>
<feature type="binding site" evidence="1">
    <location>
        <begin position="884"/>
        <end position="885"/>
    </location>
    <ligand>
        <name>substrate</name>
    </ligand>
</feature>
<feature type="binding site" evidence="1">
    <location>
        <begin position="1143"/>
        <end position="1144"/>
    </location>
    <ligand>
        <name>substrate</name>
    </ligand>
</feature>
<evidence type="ECO:0000250" key="1">
    <source>
        <dbReference type="UniProtKB" id="D6XZ22"/>
    </source>
</evidence>
<evidence type="ECO:0000269" key="2">
    <source>
    </source>
</evidence>
<evidence type="ECO:0000305" key="3"/>
<reference key="1">
    <citation type="journal article" date="2002" name="J. Bacteriol.">
        <title>Whole-genome comparison of Mycobacterium tuberculosis clinical and laboratory strains.</title>
        <authorList>
            <person name="Fleischmann R.D."/>
            <person name="Alland D."/>
            <person name="Eisen J.A."/>
            <person name="Carpenter L."/>
            <person name="White O."/>
            <person name="Peterson J.D."/>
            <person name="DeBoy R.T."/>
            <person name="Dodson R.J."/>
            <person name="Gwinn M.L."/>
            <person name="Haft D.H."/>
            <person name="Hickey E.K."/>
            <person name="Kolonay J.F."/>
            <person name="Nelson W.C."/>
            <person name="Umayam L.A."/>
            <person name="Ermolaeva M.D."/>
            <person name="Salzberg S.L."/>
            <person name="Delcher A."/>
            <person name="Utterback T.R."/>
            <person name="Weidman J.F."/>
            <person name="Khouri H.M."/>
            <person name="Gill J."/>
            <person name="Mikula A."/>
            <person name="Bishai W."/>
            <person name="Jacobs W.R. Jr."/>
            <person name="Venter J.C."/>
            <person name="Fraser C.M."/>
        </authorList>
    </citation>
    <scope>NUCLEOTIDE SEQUENCE [LARGE SCALE GENOMIC DNA]</scope>
    <source>
        <strain>CDC 1551 / Oshkosh</strain>
    </source>
</reference>
<reference key="2">
    <citation type="journal article" date="2003" name="J. Exp. Med.">
        <title>Inhibition of respiration by nitric oxide induces a Mycobacterium tuberculosis dormancy program.</title>
        <authorList>
            <person name="Voskuil M.I."/>
            <person name="Schnappinger D."/>
            <person name="Visconti K.C."/>
            <person name="Harrell M.I."/>
            <person name="Dolganov G.M."/>
            <person name="Sherman D.R."/>
            <person name="Schoolnik G.K."/>
        </authorList>
    </citation>
    <scope>INDUCTION BY NITRIC OXIDE (NO) AND BY HYPOXIA</scope>
    <scope>DORMANCY REGULON</scope>
    <source>
        <strain>CDC 1551 / Oshkosh</strain>
    </source>
</reference>
<keyword id="KW-0326">Glycosidase</keyword>
<keyword id="KW-0378">Hydrolase</keyword>
<keyword id="KW-1185">Reference proteome</keyword>
<comment type="induction">
    <text evidence="2">A member of the dormancy regulon. Induced in response to reduced oxygen tension (hypoxia) and low levels of nitric oxide (NO).</text>
</comment>
<comment type="similarity">
    <text evidence="3">In the N-terminal section; belongs to the trehalose phosphatase family.</text>
</comment>
<comment type="similarity">
    <text evidence="3">In the C-terminal section; belongs to the glycosyl hydrolase 65 family.</text>
</comment>
<sequence length="1327" mass="145784">MRCGIVVNVTGPPPTIDRRYHDAVIVGLDNVVDKATRVHAAAWTKFLDDYLTRRPQRTGEDHCPLTHDDYRRFLAGKPDGVADFLAARGIRLPPGSPTDLTDDTVYGLQNLERQTFLQLLNTGVPEGKSIASFARRLQVAGVRVAAHTSHRNYGHTLDATGLAEVFAVFVDGAVTAELGLPAEPNPAGLIETAKRLGANPGRCVVIDSCQTGLRAGRNGGFALVIAVDAHGDAENLLSSGADAVVADLAAVTVGSGDAAISTIPDALQVYSQLKRLLTGRRPAVFLDFDGTLSDIVERPEAATLVDGAAEALRALAAQCPVAVISGRDLADVRNRVKVDGLWLAGSHGFELVAPDGSHHQNAAATAAIDGLAEAAAQLADALREIAGAVVEHKRFAVAVHYRNVADDSVDNLIAAVRRLGHAAGLRVTTGRKVVELRPDIAWDKGKALDWIGERLGPAEVGPDLRLPIYIGDDLTDEDAFDAVRFTGVGIVVRHNEHGDRRSAATFRLECPYTVCQFLSQLACDLQEAVQHDDPWTLVFHGYDPGQERLREALCAVGNGYLGSRGCAPESAESEAHYPGTYVAGVYNQLTDHIEGCTVDNESLVNLPNWLSLTFRIDGGAWFNVDTVELLSYRQTFDLRRATLTRSLRFRDAGGRVTTMTQERFASMNRPNLVALQTRIESENWSGTVDFRSLVDGGVHNTLVDRYRQLSSQHLTTAEIEVLADSVLLRTQTSQSGIAIAVAARSTLWRDGQRVDAQYRVARDTNRGGHDIQVTLSAGQSVTLEKVATIFTSRDAATLTAAISAQRCLGEAGRYAELCQQHVRAWARLWERCAIDLTGNTEELRLVRLHLLHLLQTISPHTAELDAGVPARGLNGEAYRGHVFWDALFVAPVLSLRMPKVARSLLDYRYRRLPAARRAAHRAGHLGAMYPWQSGSDGSEVSQQLHLNPRSGRWTPDPSDRAHHVGLAVAYNAWHYYQVTGDRQYLVDCGAELLVEIARFWVGLAKLDDSRGRYLIRGVIGPDEFHSGYPGNEYDGIDNNAYTNVMAVWVILRAMEALDLLPLTDRRHLIEKLGLTTQERDQWDDVSRRMFVPFHDGVISQFEGYSELAELDWDHYRHRYGNIQRLDRILEAEGDSVNNYQASKQADALMLLYLLSSDELIGLLARLGYRFAPTQIPGTVDYYLARTSDGSTLSAVVHAWVLARANRSNAMEYFRQVLRSDIADVQGGTTQEGIHLAAMAGSIDLLQRCYSGLELRDDRLVLSPQWPEALGPLEFPFVYRRHQLSLRISGRSATLTAESGDAEPIEVECRGHVQRLRCGHTIEVGCSR</sequence>
<protein>
    <recommendedName>
        <fullName>Uncharacterized glycosyl hydrolase MT2062</fullName>
        <ecNumber>3.2.1.-</ecNumber>
    </recommendedName>
</protein>